<keyword id="KW-0002">3D-structure</keyword>
<keyword id="KW-0076">Bacteriochlorophyll</keyword>
<keyword id="KW-0148">Chlorophyll</keyword>
<keyword id="KW-0157">Chromophore</keyword>
<keyword id="KW-0249">Electron transport</keyword>
<keyword id="KW-0408">Iron</keyword>
<keyword id="KW-0460">Magnesium</keyword>
<keyword id="KW-0472">Membrane</keyword>
<keyword id="KW-0479">Metal-binding</keyword>
<keyword id="KW-0602">Photosynthesis</keyword>
<keyword id="KW-0674">Reaction center</keyword>
<keyword id="KW-1185">Reference proteome</keyword>
<keyword id="KW-0812">Transmembrane</keyword>
<keyword id="KW-1133">Transmembrane helix</keyword>
<keyword id="KW-0813">Transport</keyword>
<gene>
    <name type="primary">pufL</name>
    <name type="ordered locus">RHOS4_18610</name>
    <name type="ORF">RSP_0257</name>
</gene>
<evidence type="ECO:0000250" key="1"/>
<evidence type="ECO:0000305" key="2"/>
<evidence type="ECO:0007829" key="3">
    <source>
        <dbReference type="PDB" id="4IN5"/>
    </source>
</evidence>
<evidence type="ECO:0007829" key="4">
    <source>
        <dbReference type="PDB" id="7F0L"/>
    </source>
</evidence>
<evidence type="ECO:0007829" key="5">
    <source>
        <dbReference type="PDB" id="7P2C"/>
    </source>
</evidence>
<evidence type="ECO:0007829" key="6">
    <source>
        <dbReference type="PDB" id="7VNY"/>
    </source>
</evidence>
<proteinExistence type="evidence at protein level"/>
<accession>Q3J1A5</accession>
<accession>P02954</accession>
<accession>Q9RFB9</accession>
<sequence length="282" mass="31457">MALLSFERKYRVPGGTLVGGNLFDFWVGPFYVGFFGVATFFFAALGIILIAWSAVLQGTWNPQLISVYPPALEYGLGGAPLAKGGLWQIITICATGAFVSWALREVEICRKLGIGYHIPFAFAFAILAYLTLVLFRPVMMGAWGYAFPYGIWTHLDWVSNTGYTYGNFHYNPAHMIAISFFFTNALALALHGALVLSAANPEKGKEMRTPDHEDTFFRDLVGYSIGTLGIHRLGLLLSLSAVFFSALCMIITGTIWFDQWVDWWQWWVKLPWWANIPGGING</sequence>
<feature type="initiator methionine" description="Removed" evidence="1">
    <location>
        <position position="1"/>
    </location>
</feature>
<feature type="chain" id="PRO_0000090408" description="Reaction center protein L chain">
    <location>
        <begin position="2"/>
        <end position="282"/>
    </location>
</feature>
<feature type="topological domain" description="Cytoplasmic" evidence="1">
    <location>
        <begin position="2"/>
        <end position="32"/>
    </location>
</feature>
<feature type="transmembrane region" description="Helical" evidence="1">
    <location>
        <begin position="33"/>
        <end position="56"/>
    </location>
</feature>
<feature type="topological domain" description="Periplasmic" evidence="1">
    <location>
        <begin position="57"/>
        <end position="83"/>
    </location>
</feature>
<feature type="transmembrane region" description="Helical" evidence="1">
    <location>
        <begin position="84"/>
        <end position="112"/>
    </location>
</feature>
<feature type="topological domain" description="Cytoplasmic" evidence="1">
    <location>
        <begin position="113"/>
        <end position="116"/>
    </location>
</feature>
<feature type="transmembrane region" description="Helical" evidence="1">
    <location>
        <begin position="117"/>
        <end position="139"/>
    </location>
</feature>
<feature type="topological domain" description="Periplasmic" evidence="1">
    <location>
        <begin position="140"/>
        <end position="171"/>
    </location>
</feature>
<feature type="transmembrane region" description="Helical" evidence="1">
    <location>
        <begin position="172"/>
        <end position="199"/>
    </location>
</feature>
<feature type="topological domain" description="Cytoplasmic" evidence="1">
    <location>
        <begin position="200"/>
        <end position="225"/>
    </location>
</feature>
<feature type="transmembrane region" description="Helical" evidence="1">
    <location>
        <begin position="226"/>
        <end position="251"/>
    </location>
</feature>
<feature type="topological domain" description="Periplasmic" evidence="1">
    <location>
        <begin position="252"/>
        <end position="282"/>
    </location>
</feature>
<feature type="binding site" description="axial binding residue" evidence="1">
    <location>
        <position position="154"/>
    </location>
    <ligand>
        <name>(7R,8Z)-bacteriochlorophyll b</name>
        <dbReference type="ChEBI" id="CHEBI:30034"/>
    </ligand>
    <ligandPart>
        <name>Mg</name>
        <dbReference type="ChEBI" id="CHEBI:25107"/>
    </ligandPart>
</feature>
<feature type="binding site" description="axial binding residue" evidence="1">
    <location>
        <position position="174"/>
    </location>
    <ligand>
        <name>(7R,8Z)-bacteriochlorophyll b</name>
        <dbReference type="ChEBI" id="CHEBI:30034"/>
    </ligand>
    <ligandPart>
        <name>Mg</name>
        <dbReference type="ChEBI" id="CHEBI:25107"/>
    </ligandPart>
</feature>
<feature type="binding site" evidence="1">
    <location>
        <position position="191"/>
    </location>
    <ligand>
        <name>Fe cation</name>
        <dbReference type="ChEBI" id="CHEBI:24875"/>
    </ligand>
</feature>
<feature type="binding site" evidence="1">
    <location>
        <position position="217"/>
    </location>
    <ligand>
        <name>a ubiquinone</name>
        <dbReference type="ChEBI" id="CHEBI:16389"/>
    </ligand>
</feature>
<feature type="binding site" evidence="1">
    <location>
        <position position="231"/>
    </location>
    <ligand>
        <name>Fe cation</name>
        <dbReference type="ChEBI" id="CHEBI:24875"/>
    </ligand>
</feature>
<feature type="sequence conflict" description="In Ref. 1; AAF24304." evidence="2" ref="1">
    <original>V</original>
    <variation>E</variation>
    <location>
        <position position="55"/>
    </location>
</feature>
<feature type="sequence conflict" description="In Ref. 1; AAF24304." evidence="2" ref="1">
    <original>T</original>
    <variation>S</variation>
    <location>
        <position position="59"/>
    </location>
</feature>
<feature type="sequence conflict" description="In Ref. 1; AAF24304." evidence="2" ref="1">
    <original>S</original>
    <variation>F</variation>
    <location>
        <position position="66"/>
    </location>
</feature>
<feature type="turn" evidence="3">
    <location>
        <begin position="5"/>
        <end position="7"/>
    </location>
</feature>
<feature type="helix" evidence="5">
    <location>
        <begin position="8"/>
        <end position="10"/>
    </location>
</feature>
<feature type="strand" evidence="5">
    <location>
        <begin position="17"/>
        <end position="19"/>
    </location>
</feature>
<feature type="turn" evidence="3">
    <location>
        <begin position="20"/>
        <end position="23"/>
    </location>
</feature>
<feature type="strand" evidence="6">
    <location>
        <begin position="25"/>
        <end position="27"/>
    </location>
</feature>
<feature type="strand" evidence="6">
    <location>
        <begin position="30"/>
        <end position="32"/>
    </location>
</feature>
<feature type="helix" evidence="5">
    <location>
        <begin position="33"/>
        <end position="57"/>
    </location>
</feature>
<feature type="turn" evidence="5">
    <location>
        <begin position="62"/>
        <end position="64"/>
    </location>
</feature>
<feature type="helix" evidence="5">
    <location>
        <begin position="72"/>
        <end position="74"/>
    </location>
</feature>
<feature type="helix" evidence="5">
    <location>
        <begin position="81"/>
        <end position="83"/>
    </location>
</feature>
<feature type="helix" evidence="5">
    <location>
        <begin position="85"/>
        <end position="112"/>
    </location>
</feature>
<feature type="helix" evidence="5">
    <location>
        <begin position="117"/>
        <end position="133"/>
    </location>
</feature>
<feature type="helix" evidence="5">
    <location>
        <begin position="135"/>
        <end position="140"/>
    </location>
</feature>
<feature type="helix" evidence="5">
    <location>
        <begin position="143"/>
        <end position="145"/>
    </location>
</feature>
<feature type="helix" evidence="5">
    <location>
        <begin position="153"/>
        <end position="164"/>
    </location>
</feature>
<feature type="helix" evidence="5">
    <location>
        <begin position="168"/>
        <end position="170"/>
    </location>
</feature>
<feature type="helix" evidence="5">
    <location>
        <begin position="172"/>
        <end position="199"/>
    </location>
</feature>
<feature type="strand" evidence="4">
    <location>
        <begin position="202"/>
        <end position="204"/>
    </location>
</feature>
<feature type="helix" evidence="5">
    <location>
        <begin position="210"/>
        <end position="221"/>
    </location>
</feature>
<feature type="helix" evidence="5">
    <location>
        <begin position="227"/>
        <end position="250"/>
    </location>
</feature>
<feature type="turn" evidence="5">
    <location>
        <begin position="253"/>
        <end position="255"/>
    </location>
</feature>
<feature type="helix" evidence="5">
    <location>
        <begin position="261"/>
        <end position="268"/>
    </location>
</feature>
<feature type="turn" evidence="5">
    <location>
        <begin position="271"/>
        <end position="275"/>
    </location>
</feature>
<feature type="turn" evidence="5">
    <location>
        <begin position="279"/>
        <end position="281"/>
    </location>
</feature>
<name>RCEL_CERS4</name>
<dbReference type="EMBL" id="AF195122">
    <property type="protein sequence ID" value="AAF24304.1"/>
    <property type="molecule type" value="Genomic_DNA"/>
</dbReference>
<dbReference type="EMBL" id="CP000143">
    <property type="protein sequence ID" value="ABA79429.1"/>
    <property type="molecule type" value="Genomic_DNA"/>
</dbReference>
<dbReference type="PIR" id="T50760">
    <property type="entry name" value="T50760"/>
</dbReference>
<dbReference type="RefSeq" id="WP_002720421.1">
    <property type="nucleotide sequence ID" value="NZ_CP030271.1"/>
</dbReference>
<dbReference type="RefSeq" id="YP_353330.1">
    <property type="nucleotide sequence ID" value="NC_007493.2"/>
</dbReference>
<dbReference type="PDB" id="2WX5">
    <property type="method" value="X-ray"/>
    <property type="resolution" value="2.63 A"/>
    <property type="chains" value="L=2-282"/>
</dbReference>
<dbReference type="PDB" id="4IN5">
    <property type="method" value="X-ray"/>
    <property type="resolution" value="2.20 A"/>
    <property type="chains" value="L=1-282"/>
</dbReference>
<dbReference type="PDB" id="4IN6">
    <property type="method" value="X-ray"/>
    <property type="resolution" value="2.70 A"/>
    <property type="chains" value="L=2-282"/>
</dbReference>
<dbReference type="PDB" id="4N7L">
    <property type="method" value="X-ray"/>
    <property type="resolution" value="2.85 A"/>
    <property type="chains" value="L=2-282"/>
</dbReference>
<dbReference type="PDB" id="5LRI">
    <property type="method" value="X-ray"/>
    <property type="resolution" value="2.40 A"/>
    <property type="chains" value="L=2-282"/>
</dbReference>
<dbReference type="PDB" id="7F0L">
    <property type="method" value="EM"/>
    <property type="resolution" value="2.94 A"/>
    <property type="chains" value="L=1-282"/>
</dbReference>
<dbReference type="PDB" id="7P2C">
    <property type="method" value="X-ray"/>
    <property type="resolution" value="2.04 A"/>
    <property type="chains" value="L=2-282"/>
</dbReference>
<dbReference type="PDB" id="7PIL">
    <property type="method" value="EM"/>
    <property type="resolution" value="2.50 A"/>
    <property type="chains" value="L=2-282"/>
</dbReference>
<dbReference type="PDB" id="7VA9">
    <property type="method" value="EM"/>
    <property type="resolution" value="3.08 A"/>
    <property type="chains" value="L/l=1-282"/>
</dbReference>
<dbReference type="PDB" id="7VB9">
    <property type="method" value="EM"/>
    <property type="resolution" value="3.45 A"/>
    <property type="chains" value="L/l=1-282"/>
</dbReference>
<dbReference type="PDB" id="7VNM">
    <property type="method" value="EM"/>
    <property type="resolution" value="2.86 A"/>
    <property type="chains" value="L=1-282"/>
</dbReference>
<dbReference type="PDB" id="7VNY">
    <property type="method" value="EM"/>
    <property type="resolution" value="2.79 A"/>
    <property type="chains" value="L=1-282"/>
</dbReference>
<dbReference type="PDB" id="7VOR">
    <property type="method" value="EM"/>
    <property type="resolution" value="2.74 A"/>
    <property type="chains" value="L/l=1-282"/>
</dbReference>
<dbReference type="PDB" id="7VOT">
    <property type="method" value="EM"/>
    <property type="resolution" value="2.90 A"/>
    <property type="chains" value="L/l=1-282"/>
</dbReference>
<dbReference type="PDB" id="7VOY">
    <property type="method" value="EM"/>
    <property type="resolution" value="4.20 A"/>
    <property type="chains" value="L=1-282"/>
</dbReference>
<dbReference type="PDBsum" id="2WX5"/>
<dbReference type="PDBsum" id="4IN5"/>
<dbReference type="PDBsum" id="4IN6"/>
<dbReference type="PDBsum" id="4N7L"/>
<dbReference type="PDBsum" id="5LRI"/>
<dbReference type="PDBsum" id="7F0L"/>
<dbReference type="PDBsum" id="7P2C"/>
<dbReference type="PDBsum" id="7PIL"/>
<dbReference type="PDBsum" id="7VA9"/>
<dbReference type="PDBsum" id="7VB9"/>
<dbReference type="PDBsum" id="7VNM"/>
<dbReference type="PDBsum" id="7VNY"/>
<dbReference type="PDBsum" id="7VOR"/>
<dbReference type="PDBsum" id="7VOT"/>
<dbReference type="PDBsum" id="7VOY"/>
<dbReference type="EMDB" id="EMD-13441"/>
<dbReference type="EMDB" id="EMD-13590"/>
<dbReference type="EMDB" id="EMD-31400"/>
<dbReference type="EMDB" id="EMD-31835"/>
<dbReference type="EMDB" id="EMD-31875"/>
<dbReference type="EMDB" id="EMD-32042"/>
<dbReference type="EMDB" id="EMD-32047"/>
<dbReference type="EMDB" id="EMD-32058"/>
<dbReference type="EMDB" id="EMD-32059"/>
<dbReference type="EMDB" id="EMD-32062"/>
<dbReference type="SMR" id="Q3J1A5"/>
<dbReference type="STRING" id="272943.RSP_0257"/>
<dbReference type="DrugBank" id="DB04147">
    <property type="generic name" value="Dodecyldimethylamine N-oxide"/>
</dbReference>
<dbReference type="EnsemblBacteria" id="ABA79429">
    <property type="protein sequence ID" value="ABA79429"/>
    <property type="gene ID" value="RSP_0257"/>
</dbReference>
<dbReference type="GeneID" id="67446990"/>
<dbReference type="KEGG" id="rsp:RSP_0257"/>
<dbReference type="PATRIC" id="fig|272943.9.peg.2200"/>
<dbReference type="eggNOG" id="ENOG502Z7K3">
    <property type="taxonomic scope" value="Bacteria"/>
</dbReference>
<dbReference type="OrthoDB" id="8555181at2"/>
<dbReference type="PhylomeDB" id="Q3J1A5"/>
<dbReference type="EvolutionaryTrace" id="Q3J1A5"/>
<dbReference type="Proteomes" id="UP000002703">
    <property type="component" value="Chromosome 1"/>
</dbReference>
<dbReference type="GO" id="GO:0030077">
    <property type="term" value="C:plasma membrane light-harvesting complex"/>
    <property type="evidence" value="ECO:0007669"/>
    <property type="project" value="InterPro"/>
</dbReference>
<dbReference type="GO" id="GO:0042717">
    <property type="term" value="C:plasma membrane-derived chromatophore membrane"/>
    <property type="evidence" value="ECO:0007669"/>
    <property type="project" value="UniProtKB-SubCell"/>
</dbReference>
<dbReference type="GO" id="GO:0042314">
    <property type="term" value="F:bacteriochlorophyll binding"/>
    <property type="evidence" value="ECO:0007669"/>
    <property type="project" value="UniProtKB-KW"/>
</dbReference>
<dbReference type="GO" id="GO:0045156">
    <property type="term" value="F:electron transporter, transferring electrons within the cyclic electron transport pathway of photosynthesis activity"/>
    <property type="evidence" value="ECO:0007669"/>
    <property type="project" value="InterPro"/>
</dbReference>
<dbReference type="GO" id="GO:0046872">
    <property type="term" value="F:metal ion binding"/>
    <property type="evidence" value="ECO:0007669"/>
    <property type="project" value="UniProtKB-KW"/>
</dbReference>
<dbReference type="GO" id="GO:0009772">
    <property type="term" value="P:photosynthetic electron transport in photosystem II"/>
    <property type="evidence" value="ECO:0007669"/>
    <property type="project" value="InterPro"/>
</dbReference>
<dbReference type="CDD" id="cd09290">
    <property type="entry name" value="Photo-RC_L"/>
    <property type="match status" value="1"/>
</dbReference>
<dbReference type="Gene3D" id="1.20.85.10">
    <property type="entry name" value="Photosystem II protein D1-like"/>
    <property type="match status" value="2"/>
</dbReference>
<dbReference type="InterPro" id="IPR036854">
    <property type="entry name" value="Photo_II_D1/D2_sf"/>
</dbReference>
<dbReference type="InterPro" id="IPR005871">
    <property type="entry name" value="Photo_RC_L"/>
</dbReference>
<dbReference type="InterPro" id="IPR000484">
    <property type="entry name" value="Photo_RC_L/M"/>
</dbReference>
<dbReference type="InterPro" id="IPR055265">
    <property type="entry name" value="Photo_RC_L/M_CS"/>
</dbReference>
<dbReference type="NCBIfam" id="TIGR01157">
    <property type="entry name" value="pufL"/>
    <property type="match status" value="1"/>
</dbReference>
<dbReference type="Pfam" id="PF00124">
    <property type="entry name" value="Photo_RC"/>
    <property type="match status" value="1"/>
</dbReference>
<dbReference type="PRINTS" id="PR00256">
    <property type="entry name" value="REACTNCENTRE"/>
</dbReference>
<dbReference type="SUPFAM" id="SSF81483">
    <property type="entry name" value="Bacterial photosystem II reaction centre, L and M subunits"/>
    <property type="match status" value="1"/>
</dbReference>
<dbReference type="PROSITE" id="PS00244">
    <property type="entry name" value="REACTION_CENTER"/>
    <property type="match status" value="1"/>
</dbReference>
<reference key="1">
    <citation type="journal article" date="2000" name="Nucleic Acids Res.">
        <title>DNA sequence analysis of the photosynthesis region of Rhodobacter sphaeroides 2.4.1.</title>
        <authorList>
            <person name="Choudhary M."/>
            <person name="Kaplan S."/>
        </authorList>
    </citation>
    <scope>NUCLEOTIDE SEQUENCE [GENOMIC DNA]</scope>
</reference>
<reference key="2">
    <citation type="submission" date="2005-09" db="EMBL/GenBank/DDBJ databases">
        <title>Complete sequence of chromosome 1 of Rhodobacter sphaeroides 2.4.1.</title>
        <authorList>
            <person name="Copeland A."/>
            <person name="Lucas S."/>
            <person name="Lapidus A."/>
            <person name="Barry K."/>
            <person name="Detter J.C."/>
            <person name="Glavina T."/>
            <person name="Hammon N."/>
            <person name="Israni S."/>
            <person name="Pitluck S."/>
            <person name="Richardson P."/>
            <person name="Mackenzie C."/>
            <person name="Choudhary M."/>
            <person name="Larimer F."/>
            <person name="Hauser L.J."/>
            <person name="Land M."/>
            <person name="Donohue T.J."/>
            <person name="Kaplan S."/>
        </authorList>
    </citation>
    <scope>NUCLEOTIDE SEQUENCE [LARGE SCALE GENOMIC DNA]</scope>
    <source>
        <strain>ATCC 17023 / DSM 158 / JCM 6121 / CCUG 31486 / LMG 2827 / NBRC 12203 / NCIMB 8253 / ATH 2.4.1.</strain>
    </source>
</reference>
<protein>
    <recommendedName>
        <fullName>Reaction center protein L chain</fullName>
    </recommendedName>
    <alternativeName>
        <fullName>Photosynthetic reaction center L subunit</fullName>
    </alternativeName>
</protein>
<comment type="function">
    <text evidence="1">The reaction center is a membrane-bound complex that mediates the initial photochemical event in the electron transfer process of photosynthesis.</text>
</comment>
<comment type="subunit">
    <text evidence="1">Reaction center is composed of four bacteriochlorophylls, two bacteriopheophytins, two ubiquinones, one iron, and three highly hydrophobic polypeptide chains (designated L, M, and H).</text>
</comment>
<comment type="subcellular location">
    <subcellularLocation>
        <location evidence="1">Cellular chromatophore membrane</location>
        <topology evidence="1">Multi-pass membrane protein</topology>
    </subcellularLocation>
</comment>
<comment type="similarity">
    <text evidence="2">Belongs to the reaction center PufL/M/PsbA/D family.</text>
</comment>
<organism>
    <name type="scientific">Cereibacter sphaeroides (strain ATCC 17023 / DSM 158 / JCM 6121 / CCUG 31486 / LMG 2827 / NBRC 12203 / NCIMB 8253 / ATH 2.4.1.)</name>
    <name type="common">Rhodobacter sphaeroides</name>
    <dbReference type="NCBI Taxonomy" id="272943"/>
    <lineage>
        <taxon>Bacteria</taxon>
        <taxon>Pseudomonadati</taxon>
        <taxon>Pseudomonadota</taxon>
        <taxon>Alphaproteobacteria</taxon>
        <taxon>Rhodobacterales</taxon>
        <taxon>Paracoccaceae</taxon>
        <taxon>Cereibacter</taxon>
    </lineage>
</organism>